<name>LFTR_CHLPD</name>
<accession>A1BEA5</accession>
<reference key="1">
    <citation type="submission" date="2006-12" db="EMBL/GenBank/DDBJ databases">
        <title>Complete sequence of Chlorobium phaeobacteroides DSM 266.</title>
        <authorList>
            <consortium name="US DOE Joint Genome Institute"/>
            <person name="Copeland A."/>
            <person name="Lucas S."/>
            <person name="Lapidus A."/>
            <person name="Barry K."/>
            <person name="Detter J.C."/>
            <person name="Glavina del Rio T."/>
            <person name="Hammon N."/>
            <person name="Israni S."/>
            <person name="Pitluck S."/>
            <person name="Goltsman E."/>
            <person name="Schmutz J."/>
            <person name="Larimer F."/>
            <person name="Land M."/>
            <person name="Hauser L."/>
            <person name="Mikhailova N."/>
            <person name="Li T."/>
            <person name="Overmann J."/>
            <person name="Bryant D.A."/>
            <person name="Richardson P."/>
        </authorList>
    </citation>
    <scope>NUCLEOTIDE SEQUENCE [LARGE SCALE GENOMIC DNA]</scope>
    <source>
        <strain>DSM 266 / SMG 266 / 2430</strain>
    </source>
</reference>
<keyword id="KW-0012">Acyltransferase</keyword>
<keyword id="KW-0963">Cytoplasm</keyword>
<keyword id="KW-1185">Reference proteome</keyword>
<keyword id="KW-0808">Transferase</keyword>
<comment type="function">
    <text evidence="1">Functions in the N-end rule pathway of protein degradation where it conjugates Leu, Phe and, less efficiently, Met from aminoacyl-tRNAs to the N-termini of proteins containing an N-terminal arginine or lysine.</text>
</comment>
<comment type="catalytic activity">
    <reaction evidence="1">
        <text>N-terminal L-lysyl-[protein] + L-leucyl-tRNA(Leu) = N-terminal L-leucyl-L-lysyl-[protein] + tRNA(Leu) + H(+)</text>
        <dbReference type="Rhea" id="RHEA:12340"/>
        <dbReference type="Rhea" id="RHEA-COMP:9613"/>
        <dbReference type="Rhea" id="RHEA-COMP:9622"/>
        <dbReference type="Rhea" id="RHEA-COMP:12670"/>
        <dbReference type="Rhea" id="RHEA-COMP:12671"/>
        <dbReference type="ChEBI" id="CHEBI:15378"/>
        <dbReference type="ChEBI" id="CHEBI:65249"/>
        <dbReference type="ChEBI" id="CHEBI:78442"/>
        <dbReference type="ChEBI" id="CHEBI:78494"/>
        <dbReference type="ChEBI" id="CHEBI:133043"/>
        <dbReference type="EC" id="2.3.2.6"/>
    </reaction>
</comment>
<comment type="catalytic activity">
    <reaction evidence="1">
        <text>N-terminal L-arginyl-[protein] + L-leucyl-tRNA(Leu) = N-terminal L-leucyl-L-arginyl-[protein] + tRNA(Leu) + H(+)</text>
        <dbReference type="Rhea" id="RHEA:50416"/>
        <dbReference type="Rhea" id="RHEA-COMP:9613"/>
        <dbReference type="Rhea" id="RHEA-COMP:9622"/>
        <dbReference type="Rhea" id="RHEA-COMP:12672"/>
        <dbReference type="Rhea" id="RHEA-COMP:12673"/>
        <dbReference type="ChEBI" id="CHEBI:15378"/>
        <dbReference type="ChEBI" id="CHEBI:64719"/>
        <dbReference type="ChEBI" id="CHEBI:78442"/>
        <dbReference type="ChEBI" id="CHEBI:78494"/>
        <dbReference type="ChEBI" id="CHEBI:133044"/>
        <dbReference type="EC" id="2.3.2.6"/>
    </reaction>
</comment>
<comment type="catalytic activity">
    <reaction evidence="1">
        <text>L-phenylalanyl-tRNA(Phe) + an N-terminal L-alpha-aminoacyl-[protein] = an N-terminal L-phenylalanyl-L-alpha-aminoacyl-[protein] + tRNA(Phe)</text>
        <dbReference type="Rhea" id="RHEA:43632"/>
        <dbReference type="Rhea" id="RHEA-COMP:9668"/>
        <dbReference type="Rhea" id="RHEA-COMP:9699"/>
        <dbReference type="Rhea" id="RHEA-COMP:10636"/>
        <dbReference type="Rhea" id="RHEA-COMP:10637"/>
        <dbReference type="ChEBI" id="CHEBI:78442"/>
        <dbReference type="ChEBI" id="CHEBI:78531"/>
        <dbReference type="ChEBI" id="CHEBI:78597"/>
        <dbReference type="ChEBI" id="CHEBI:83561"/>
        <dbReference type="EC" id="2.3.2.6"/>
    </reaction>
</comment>
<comment type="subcellular location">
    <subcellularLocation>
        <location evidence="1">Cytoplasm</location>
    </subcellularLocation>
</comment>
<comment type="similarity">
    <text evidence="1">Belongs to the L/F-transferase family.</text>
</comment>
<proteinExistence type="inferred from homology"/>
<dbReference type="EC" id="2.3.2.6" evidence="1"/>
<dbReference type="EMBL" id="CP000492">
    <property type="protein sequence ID" value="ABL64732.1"/>
    <property type="molecule type" value="Genomic_DNA"/>
</dbReference>
<dbReference type="RefSeq" id="WP_011744562.1">
    <property type="nucleotide sequence ID" value="NC_008639.1"/>
</dbReference>
<dbReference type="SMR" id="A1BEA5"/>
<dbReference type="STRING" id="290317.Cpha266_0677"/>
<dbReference type="KEGG" id="cph:Cpha266_0677"/>
<dbReference type="eggNOG" id="COG2360">
    <property type="taxonomic scope" value="Bacteria"/>
</dbReference>
<dbReference type="HOGENOM" id="CLU_075045_1_1_10"/>
<dbReference type="OrthoDB" id="9790282at2"/>
<dbReference type="Proteomes" id="UP000008701">
    <property type="component" value="Chromosome"/>
</dbReference>
<dbReference type="GO" id="GO:0005737">
    <property type="term" value="C:cytoplasm"/>
    <property type="evidence" value="ECO:0007669"/>
    <property type="project" value="UniProtKB-SubCell"/>
</dbReference>
<dbReference type="GO" id="GO:0008914">
    <property type="term" value="F:leucyl-tRNA--protein transferase activity"/>
    <property type="evidence" value="ECO:0007669"/>
    <property type="project" value="UniProtKB-UniRule"/>
</dbReference>
<dbReference type="GO" id="GO:0030163">
    <property type="term" value="P:protein catabolic process"/>
    <property type="evidence" value="ECO:0007669"/>
    <property type="project" value="UniProtKB-UniRule"/>
</dbReference>
<dbReference type="Gene3D" id="3.40.630.70">
    <property type="entry name" value="Leucyl/phenylalanyl-tRNA-protein transferase, C-terminal domain"/>
    <property type="match status" value="1"/>
</dbReference>
<dbReference type="Gene3D" id="3.30.70.3550">
    <property type="entry name" value="Leucyl/phenylalanyl-tRNA-protein transferase, N-terminal domain"/>
    <property type="match status" value="1"/>
</dbReference>
<dbReference type="HAMAP" id="MF_00688">
    <property type="entry name" value="Leu_Phe_trans"/>
    <property type="match status" value="1"/>
</dbReference>
<dbReference type="InterPro" id="IPR016181">
    <property type="entry name" value="Acyl_CoA_acyltransferase"/>
</dbReference>
<dbReference type="InterPro" id="IPR004616">
    <property type="entry name" value="Leu/Phe-tRNA_Trfase"/>
</dbReference>
<dbReference type="InterPro" id="IPR042203">
    <property type="entry name" value="Leu/Phe-tRNA_Trfase_C"/>
</dbReference>
<dbReference type="InterPro" id="IPR042221">
    <property type="entry name" value="Leu/Phe-tRNA_Trfase_N"/>
</dbReference>
<dbReference type="NCBIfam" id="TIGR00667">
    <property type="entry name" value="aat"/>
    <property type="match status" value="1"/>
</dbReference>
<dbReference type="PANTHER" id="PTHR30098">
    <property type="entry name" value="LEUCYL/PHENYLALANYL-TRNA--PROTEIN TRANSFERASE"/>
    <property type="match status" value="1"/>
</dbReference>
<dbReference type="PANTHER" id="PTHR30098:SF2">
    <property type="entry name" value="LEUCYL_PHENYLALANYL-TRNA--PROTEIN TRANSFERASE"/>
    <property type="match status" value="1"/>
</dbReference>
<dbReference type="Pfam" id="PF03588">
    <property type="entry name" value="Leu_Phe_trans"/>
    <property type="match status" value="1"/>
</dbReference>
<dbReference type="SUPFAM" id="SSF55729">
    <property type="entry name" value="Acyl-CoA N-acyltransferases (Nat)"/>
    <property type="match status" value="1"/>
</dbReference>
<sequence>MIRIDELLRAYRKGLFPMADPDDEKVYWCQPYKRAVVPLLSYMPSRDVARILRRGEFEVRIDSDFEGVIRGCAAPRKSDSQTWISPEIMDAYLTLNQLGVAHSVECWHHGELSGGLYGLSMGAAFFGESMFFRRSYASQVAFDHLVRRLKDRGYLLLDAQIMNPHLQKLGAVEIDHDEYMLQLDIALGKKIRFI</sequence>
<feature type="chain" id="PRO_0000304332" description="Leucyl/phenylalanyl-tRNA--protein transferase">
    <location>
        <begin position="1"/>
        <end position="194"/>
    </location>
</feature>
<evidence type="ECO:0000255" key="1">
    <source>
        <dbReference type="HAMAP-Rule" id="MF_00688"/>
    </source>
</evidence>
<gene>
    <name evidence="1" type="primary">aat</name>
    <name type="ordered locus">Cpha266_0677</name>
</gene>
<protein>
    <recommendedName>
        <fullName evidence="1">Leucyl/phenylalanyl-tRNA--protein transferase</fullName>
        <ecNumber evidence="1">2.3.2.6</ecNumber>
    </recommendedName>
    <alternativeName>
        <fullName evidence="1">L/F-transferase</fullName>
    </alternativeName>
    <alternativeName>
        <fullName evidence="1">Leucyltransferase</fullName>
    </alternativeName>
    <alternativeName>
        <fullName evidence="1">Phenyalanyltransferase</fullName>
    </alternativeName>
</protein>
<organism>
    <name type="scientific">Chlorobium phaeobacteroides (strain DSM 266 / SMG 266 / 2430)</name>
    <dbReference type="NCBI Taxonomy" id="290317"/>
    <lineage>
        <taxon>Bacteria</taxon>
        <taxon>Pseudomonadati</taxon>
        <taxon>Chlorobiota</taxon>
        <taxon>Chlorobiia</taxon>
        <taxon>Chlorobiales</taxon>
        <taxon>Chlorobiaceae</taxon>
        <taxon>Chlorobium/Pelodictyon group</taxon>
        <taxon>Chlorobium</taxon>
    </lineage>
</organism>